<feature type="chain" id="PRO_0000289398" description="Lipoprotein signal peptidase">
    <location>
        <begin position="1"/>
        <end position="182"/>
    </location>
</feature>
<feature type="transmembrane region" description="Helical" evidence="1">
    <location>
        <begin position="15"/>
        <end position="35"/>
    </location>
</feature>
<feature type="transmembrane region" description="Helical" evidence="1">
    <location>
        <begin position="44"/>
        <end position="64"/>
    </location>
</feature>
<feature type="transmembrane region" description="Helical" evidence="1">
    <location>
        <begin position="65"/>
        <end position="85"/>
    </location>
</feature>
<feature type="transmembrane region" description="Helical" evidence="1">
    <location>
        <begin position="97"/>
        <end position="117"/>
    </location>
</feature>
<feature type="transmembrane region" description="Helical" evidence="1">
    <location>
        <begin position="155"/>
        <end position="175"/>
    </location>
</feature>
<feature type="active site" evidence="1">
    <location>
        <position position="140"/>
    </location>
</feature>
<feature type="active site" evidence="1">
    <location>
        <position position="162"/>
    </location>
</feature>
<proteinExistence type="inferred from homology"/>
<accession>Q053U5</accession>
<reference key="1">
    <citation type="journal article" date="2006" name="Proc. Natl. Acad. Sci. U.S.A.">
        <title>Genome reduction in Leptospira borgpetersenii reflects limited transmission potential.</title>
        <authorList>
            <person name="Bulach D.M."/>
            <person name="Zuerner R.L."/>
            <person name="Wilson P."/>
            <person name="Seemann T."/>
            <person name="McGrath A."/>
            <person name="Cullen P.A."/>
            <person name="Davis J."/>
            <person name="Johnson M."/>
            <person name="Kuczek E."/>
            <person name="Alt D.P."/>
            <person name="Peterson-Burch B."/>
            <person name="Coppel R.L."/>
            <person name="Rood J.I."/>
            <person name="Davies J.K."/>
            <person name="Adler B."/>
        </authorList>
    </citation>
    <scope>NUCLEOTIDE SEQUENCE [LARGE SCALE GENOMIC DNA]</scope>
    <source>
        <strain>L550</strain>
    </source>
</reference>
<evidence type="ECO:0000255" key="1">
    <source>
        <dbReference type="HAMAP-Rule" id="MF_00161"/>
    </source>
</evidence>
<organism>
    <name type="scientific">Leptospira borgpetersenii serovar Hardjo-bovis (strain L550)</name>
    <dbReference type="NCBI Taxonomy" id="355276"/>
    <lineage>
        <taxon>Bacteria</taxon>
        <taxon>Pseudomonadati</taxon>
        <taxon>Spirochaetota</taxon>
        <taxon>Spirochaetia</taxon>
        <taxon>Leptospirales</taxon>
        <taxon>Leptospiraceae</taxon>
        <taxon>Leptospira</taxon>
    </lineage>
</organism>
<keyword id="KW-0064">Aspartyl protease</keyword>
<keyword id="KW-0997">Cell inner membrane</keyword>
<keyword id="KW-1003">Cell membrane</keyword>
<keyword id="KW-0378">Hydrolase</keyword>
<keyword id="KW-0472">Membrane</keyword>
<keyword id="KW-0645">Protease</keyword>
<keyword id="KW-0812">Transmembrane</keyword>
<keyword id="KW-1133">Transmembrane helix</keyword>
<sequence>MKYFEKRFLDVYRPLYIGVIFLGIILDLVTKFLVILYFEPHRYLEVLGSFFRMTLTFNTGFVFGAFQDNAIPSLIATGIAIVFLIGYRWKNYDLGNPWGWNLVMAGAFGNFLDKFFVKIPGTGFRFGFQPNVGEYIGVVDFLDFDWPDFLLFSRWPAFNVADSCVTIGLTILIFTMKLEEEK</sequence>
<dbReference type="EC" id="3.4.23.36" evidence="1"/>
<dbReference type="EMBL" id="CP000348">
    <property type="protein sequence ID" value="ABJ78400.1"/>
    <property type="molecule type" value="Genomic_DNA"/>
</dbReference>
<dbReference type="RefSeq" id="WP_002721192.1">
    <property type="nucleotide sequence ID" value="NC_008508.1"/>
</dbReference>
<dbReference type="SMR" id="Q053U5"/>
<dbReference type="KEGG" id="lbl:LBL_0845"/>
<dbReference type="HOGENOM" id="CLU_083252_3_1_12"/>
<dbReference type="UniPathway" id="UPA00665"/>
<dbReference type="GO" id="GO:0005886">
    <property type="term" value="C:plasma membrane"/>
    <property type="evidence" value="ECO:0007669"/>
    <property type="project" value="UniProtKB-SubCell"/>
</dbReference>
<dbReference type="GO" id="GO:0004190">
    <property type="term" value="F:aspartic-type endopeptidase activity"/>
    <property type="evidence" value="ECO:0007669"/>
    <property type="project" value="UniProtKB-UniRule"/>
</dbReference>
<dbReference type="GO" id="GO:0006508">
    <property type="term" value="P:proteolysis"/>
    <property type="evidence" value="ECO:0007669"/>
    <property type="project" value="UniProtKB-KW"/>
</dbReference>
<dbReference type="HAMAP" id="MF_00161">
    <property type="entry name" value="LspA"/>
    <property type="match status" value="1"/>
</dbReference>
<dbReference type="InterPro" id="IPR001872">
    <property type="entry name" value="Peptidase_A8"/>
</dbReference>
<dbReference type="NCBIfam" id="NF011364">
    <property type="entry name" value="PRK14783.1"/>
    <property type="match status" value="1"/>
</dbReference>
<dbReference type="PANTHER" id="PTHR33695">
    <property type="entry name" value="LIPOPROTEIN SIGNAL PEPTIDASE"/>
    <property type="match status" value="1"/>
</dbReference>
<dbReference type="PANTHER" id="PTHR33695:SF1">
    <property type="entry name" value="LIPOPROTEIN SIGNAL PEPTIDASE"/>
    <property type="match status" value="1"/>
</dbReference>
<dbReference type="Pfam" id="PF01252">
    <property type="entry name" value="Peptidase_A8"/>
    <property type="match status" value="1"/>
</dbReference>
<dbReference type="PRINTS" id="PR00781">
    <property type="entry name" value="LIPOSIGPTASE"/>
</dbReference>
<dbReference type="PROSITE" id="PS00855">
    <property type="entry name" value="SPASE_II"/>
    <property type="match status" value="1"/>
</dbReference>
<name>LSPA_LEPBL</name>
<comment type="function">
    <text evidence="1">This protein specifically catalyzes the removal of signal peptides from prolipoproteins.</text>
</comment>
<comment type="catalytic activity">
    <reaction evidence="1">
        <text>Release of signal peptides from bacterial membrane prolipoproteins. Hydrolyzes -Xaa-Yaa-Zaa-|-(S,diacylglyceryl)Cys-, in which Xaa is hydrophobic (preferably Leu), and Yaa (Ala or Ser) and Zaa (Gly or Ala) have small, neutral side chains.</text>
        <dbReference type="EC" id="3.4.23.36"/>
    </reaction>
</comment>
<comment type="pathway">
    <text evidence="1">Protein modification; lipoprotein biosynthesis (signal peptide cleavage).</text>
</comment>
<comment type="subcellular location">
    <subcellularLocation>
        <location evidence="1">Cell inner membrane</location>
        <topology evidence="1">Multi-pass membrane protein</topology>
    </subcellularLocation>
</comment>
<comment type="similarity">
    <text evidence="1">Belongs to the peptidase A8 family.</text>
</comment>
<gene>
    <name evidence="1" type="primary">lspA</name>
    <name type="ordered locus">LBL_0845</name>
</gene>
<protein>
    <recommendedName>
        <fullName evidence="1">Lipoprotein signal peptidase</fullName>
        <ecNumber evidence="1">3.4.23.36</ecNumber>
    </recommendedName>
    <alternativeName>
        <fullName evidence="1">Prolipoprotein signal peptidase</fullName>
    </alternativeName>
    <alternativeName>
        <fullName evidence="1">Signal peptidase II</fullName>
        <shortName evidence="1">SPase II</shortName>
    </alternativeName>
</protein>